<name>RL1_FRATN</name>
<evidence type="ECO:0000255" key="1">
    <source>
        <dbReference type="HAMAP-Rule" id="MF_01318"/>
    </source>
</evidence>
<evidence type="ECO:0000305" key="2"/>
<keyword id="KW-0678">Repressor</keyword>
<keyword id="KW-0687">Ribonucleoprotein</keyword>
<keyword id="KW-0689">Ribosomal protein</keyword>
<keyword id="KW-0694">RNA-binding</keyword>
<keyword id="KW-0699">rRNA-binding</keyword>
<keyword id="KW-0810">Translation regulation</keyword>
<keyword id="KW-0820">tRNA-binding</keyword>
<feature type="chain" id="PRO_0000308009" description="Large ribosomal subunit protein uL1">
    <location>
        <begin position="1"/>
        <end position="231"/>
    </location>
</feature>
<sequence>MAKVSKRMKEISAKINAEKKYPVSEAFDLLREVSSVKFVESVDVSVALGVDPRKSDQVVRGASVLPNGTGKTVRVAVFAKGPAADAAKEAGAEVVGMEDLADEVKKGNMDFDVVIASPDSMRVVGQLGQILGPKGLMPNPKVGTVTMDVAKAVRDAKAGQVRYRVDKAGIIHTTIGKVNFTSDALKQNLEQLLTDLKKAKPAVSKGIYLKKVSVSSTMGPGINVDFSDLNI</sequence>
<organism>
    <name type="scientific">Francisella tularensis subsp. novicida (strain U112)</name>
    <dbReference type="NCBI Taxonomy" id="401614"/>
    <lineage>
        <taxon>Bacteria</taxon>
        <taxon>Pseudomonadati</taxon>
        <taxon>Pseudomonadota</taxon>
        <taxon>Gammaproteobacteria</taxon>
        <taxon>Thiotrichales</taxon>
        <taxon>Francisellaceae</taxon>
        <taxon>Francisella</taxon>
    </lineage>
</organism>
<reference key="1">
    <citation type="journal article" date="2007" name="Genome Biol.">
        <title>Comparison of Francisella tularensis genomes reveals evolutionary events associated with the emergence of human pathogenic strains.</title>
        <authorList>
            <person name="Rohmer L."/>
            <person name="Fong C."/>
            <person name="Abmayr S."/>
            <person name="Wasnick M."/>
            <person name="Larson Freeman T.J."/>
            <person name="Radey M."/>
            <person name="Guina T."/>
            <person name="Svensson K."/>
            <person name="Hayden H.S."/>
            <person name="Jacobs M."/>
            <person name="Gallagher L.A."/>
            <person name="Manoil C."/>
            <person name="Ernst R.K."/>
            <person name="Drees B."/>
            <person name="Buckley D."/>
            <person name="Haugen E."/>
            <person name="Bovee D."/>
            <person name="Zhou Y."/>
            <person name="Chang J."/>
            <person name="Levy R."/>
            <person name="Lim R."/>
            <person name="Gillett W."/>
            <person name="Guenthener D."/>
            <person name="Kang A."/>
            <person name="Shaffer S.A."/>
            <person name="Taylor G."/>
            <person name="Chen J."/>
            <person name="Gallis B."/>
            <person name="D'Argenio D.A."/>
            <person name="Forsman M."/>
            <person name="Olson M.V."/>
            <person name="Goodlett D.R."/>
            <person name="Kaul R."/>
            <person name="Miller S.I."/>
            <person name="Brittnacher M.J."/>
        </authorList>
    </citation>
    <scope>NUCLEOTIDE SEQUENCE [LARGE SCALE GENOMIC DNA]</scope>
    <source>
        <strain>U112</strain>
    </source>
</reference>
<protein>
    <recommendedName>
        <fullName evidence="1">Large ribosomal subunit protein uL1</fullName>
    </recommendedName>
    <alternativeName>
        <fullName evidence="2">50S ribosomal protein L1</fullName>
    </alternativeName>
</protein>
<dbReference type="EMBL" id="CP000439">
    <property type="protein sequence ID" value="ABK90435.1"/>
    <property type="molecule type" value="Genomic_DNA"/>
</dbReference>
<dbReference type="RefSeq" id="WP_003028678.1">
    <property type="nucleotide sequence ID" value="NZ_CP009633.1"/>
</dbReference>
<dbReference type="SMR" id="A0Q870"/>
<dbReference type="GeneID" id="75264697"/>
<dbReference type="KEGG" id="ftn:FTN_1571"/>
<dbReference type="KEGG" id="ftx:AW25_427"/>
<dbReference type="BioCyc" id="FTUL401614:G1G75-1623-MONOMER"/>
<dbReference type="Proteomes" id="UP000000762">
    <property type="component" value="Chromosome"/>
</dbReference>
<dbReference type="GO" id="GO:0022625">
    <property type="term" value="C:cytosolic large ribosomal subunit"/>
    <property type="evidence" value="ECO:0007669"/>
    <property type="project" value="TreeGrafter"/>
</dbReference>
<dbReference type="GO" id="GO:0019843">
    <property type="term" value="F:rRNA binding"/>
    <property type="evidence" value="ECO:0007669"/>
    <property type="project" value="UniProtKB-UniRule"/>
</dbReference>
<dbReference type="GO" id="GO:0003735">
    <property type="term" value="F:structural constituent of ribosome"/>
    <property type="evidence" value="ECO:0007669"/>
    <property type="project" value="InterPro"/>
</dbReference>
<dbReference type="GO" id="GO:0000049">
    <property type="term" value="F:tRNA binding"/>
    <property type="evidence" value="ECO:0007669"/>
    <property type="project" value="UniProtKB-KW"/>
</dbReference>
<dbReference type="GO" id="GO:0006417">
    <property type="term" value="P:regulation of translation"/>
    <property type="evidence" value="ECO:0007669"/>
    <property type="project" value="UniProtKB-KW"/>
</dbReference>
<dbReference type="GO" id="GO:0006412">
    <property type="term" value="P:translation"/>
    <property type="evidence" value="ECO:0007669"/>
    <property type="project" value="UniProtKB-UniRule"/>
</dbReference>
<dbReference type="CDD" id="cd00403">
    <property type="entry name" value="Ribosomal_L1"/>
    <property type="match status" value="1"/>
</dbReference>
<dbReference type="FunFam" id="3.40.50.790:FF:000001">
    <property type="entry name" value="50S ribosomal protein L1"/>
    <property type="match status" value="1"/>
</dbReference>
<dbReference type="Gene3D" id="3.30.190.20">
    <property type="match status" value="1"/>
</dbReference>
<dbReference type="Gene3D" id="3.40.50.790">
    <property type="match status" value="1"/>
</dbReference>
<dbReference type="HAMAP" id="MF_01318_B">
    <property type="entry name" value="Ribosomal_uL1_B"/>
    <property type="match status" value="1"/>
</dbReference>
<dbReference type="InterPro" id="IPR005878">
    <property type="entry name" value="Ribosom_uL1_bac-type"/>
</dbReference>
<dbReference type="InterPro" id="IPR002143">
    <property type="entry name" value="Ribosomal_uL1"/>
</dbReference>
<dbReference type="InterPro" id="IPR023674">
    <property type="entry name" value="Ribosomal_uL1-like"/>
</dbReference>
<dbReference type="InterPro" id="IPR028364">
    <property type="entry name" value="Ribosomal_uL1/biogenesis"/>
</dbReference>
<dbReference type="InterPro" id="IPR016095">
    <property type="entry name" value="Ribosomal_uL1_3-a/b-sand"/>
</dbReference>
<dbReference type="InterPro" id="IPR023673">
    <property type="entry name" value="Ribosomal_uL1_CS"/>
</dbReference>
<dbReference type="NCBIfam" id="TIGR01169">
    <property type="entry name" value="rplA_bact"/>
    <property type="match status" value="1"/>
</dbReference>
<dbReference type="PANTHER" id="PTHR36427">
    <property type="entry name" value="54S RIBOSOMAL PROTEIN L1, MITOCHONDRIAL"/>
    <property type="match status" value="1"/>
</dbReference>
<dbReference type="PANTHER" id="PTHR36427:SF3">
    <property type="entry name" value="LARGE RIBOSOMAL SUBUNIT PROTEIN UL1M"/>
    <property type="match status" value="1"/>
</dbReference>
<dbReference type="Pfam" id="PF00687">
    <property type="entry name" value="Ribosomal_L1"/>
    <property type="match status" value="1"/>
</dbReference>
<dbReference type="PIRSF" id="PIRSF002155">
    <property type="entry name" value="Ribosomal_L1"/>
    <property type="match status" value="1"/>
</dbReference>
<dbReference type="SUPFAM" id="SSF56808">
    <property type="entry name" value="Ribosomal protein L1"/>
    <property type="match status" value="1"/>
</dbReference>
<dbReference type="PROSITE" id="PS01199">
    <property type="entry name" value="RIBOSOMAL_L1"/>
    <property type="match status" value="1"/>
</dbReference>
<comment type="function">
    <text evidence="1">Binds directly to 23S rRNA. The L1 stalk is quite mobile in the ribosome, and is involved in E site tRNA release.</text>
</comment>
<comment type="function">
    <text evidence="1">Protein L1 is also a translational repressor protein, it controls the translation of the L11 operon by binding to its mRNA.</text>
</comment>
<comment type="subunit">
    <text evidence="1">Part of the 50S ribosomal subunit.</text>
</comment>
<comment type="similarity">
    <text evidence="1">Belongs to the universal ribosomal protein uL1 family.</text>
</comment>
<proteinExistence type="inferred from homology"/>
<gene>
    <name evidence="1" type="primary">rplA</name>
    <name type="ordered locus">FTN_1571</name>
</gene>
<accession>A0Q870</accession>